<accession>Q2FZ58</accession>
<sequence length="548" mass="60516">MISKINGKLFADMIIQGAQNLSNNADLVDSLNVYPVPDGDTGTNMNLTMTSGREEVENNLSKNIGELGKTFSKGLLMGARGNSGVILSQLFRGFCKNIESESEINSKLLAESFQAGVETAYKAVMKPVEGTILTVAKDAAQAAIEKANNTEDCIELMEYIIVKANESLENTPNLLAVLKEVGVVDSGGKGLLCVYEGFLKALKGEKVEAKVAKIDKDEFVHDEHDFHGVINTEDIIYGYCTEMMVRFGKNKKAFDEQEFRQDMSQFGDSLLVINDEEIVKVHVHTEYPGKVFNYGQQYGELIKLKVENMREQHREVIRKEQHTAKPKMETVETAIITISMGEGISEIFKSMGATHIISGGQTMNPSTEDIVKVIEQSKCKRAIILPNNKNILMASEQAASIVDAEAVVIPTKSIPQGISALFQYDVDATLEENKAQMADSVNNVKSGSLTYAVRDTKIDGVEIKKDAFMGLIEDKIVSSQSDQLTTVTELLNEMLAEDSEILTVIIGQDAEQAVTDNMINWIEEQYPDVEVEVHEGGQPIYQYFFSVE</sequence>
<feature type="chain" id="PRO_0000304162" description="Uncharacterized protein SAOUHSC_01193">
    <location>
        <begin position="1"/>
        <end position="548"/>
    </location>
</feature>
<feature type="domain" description="DhaL" evidence="1">
    <location>
        <begin position="8"/>
        <end position="200"/>
    </location>
</feature>
<feature type="helix" evidence="4">
    <location>
        <begin position="7"/>
        <end position="23"/>
    </location>
</feature>
<feature type="helix" evidence="4">
    <location>
        <begin position="25"/>
        <end position="30"/>
    </location>
</feature>
<feature type="strand" evidence="4">
    <location>
        <begin position="34"/>
        <end position="36"/>
    </location>
</feature>
<feature type="helix" evidence="4">
    <location>
        <begin position="41"/>
        <end position="58"/>
    </location>
</feature>
<feature type="helix" evidence="4">
    <location>
        <begin position="64"/>
        <end position="76"/>
    </location>
</feature>
<feature type="helix" evidence="4">
    <location>
        <begin position="81"/>
        <end position="97"/>
    </location>
</feature>
<feature type="turn" evidence="4">
    <location>
        <begin position="98"/>
        <end position="100"/>
    </location>
</feature>
<feature type="strand" evidence="4">
    <location>
        <begin position="102"/>
        <end position="104"/>
    </location>
</feature>
<feature type="helix" evidence="4">
    <location>
        <begin position="106"/>
        <end position="123"/>
    </location>
</feature>
<feature type="strand" evidence="3">
    <location>
        <begin position="124"/>
        <end position="126"/>
    </location>
</feature>
<feature type="strand" evidence="4">
    <location>
        <begin position="129"/>
        <end position="131"/>
    </location>
</feature>
<feature type="helix" evidence="4">
    <location>
        <begin position="132"/>
        <end position="147"/>
    </location>
</feature>
<feature type="helix" evidence="4">
    <location>
        <begin position="153"/>
        <end position="170"/>
    </location>
</feature>
<feature type="helix" evidence="4">
    <location>
        <begin position="171"/>
        <end position="173"/>
    </location>
</feature>
<feature type="helix" evidence="4">
    <location>
        <begin position="176"/>
        <end position="181"/>
    </location>
</feature>
<feature type="helix" evidence="4">
    <location>
        <begin position="186"/>
        <end position="202"/>
    </location>
</feature>
<feature type="strand" evidence="2">
    <location>
        <begin position="332"/>
        <end position="339"/>
    </location>
</feature>
<feature type="strand" evidence="2">
    <location>
        <begin position="341"/>
        <end position="343"/>
    </location>
</feature>
<feature type="helix" evidence="2">
    <location>
        <begin position="345"/>
        <end position="350"/>
    </location>
</feature>
<feature type="strand" evidence="2">
    <location>
        <begin position="354"/>
        <end position="358"/>
    </location>
</feature>
<feature type="strand" evidence="2">
    <location>
        <begin position="360"/>
        <end position="363"/>
    </location>
</feature>
<feature type="helix" evidence="2">
    <location>
        <begin position="367"/>
        <end position="376"/>
    </location>
</feature>
<feature type="strand" evidence="2">
    <location>
        <begin position="380"/>
        <end position="385"/>
    </location>
</feature>
<feature type="helix" evidence="2">
    <location>
        <begin position="389"/>
        <end position="391"/>
    </location>
</feature>
<feature type="helix" evidence="2">
    <location>
        <begin position="392"/>
        <end position="401"/>
    </location>
</feature>
<feature type="strand" evidence="2">
    <location>
        <begin position="402"/>
        <end position="408"/>
    </location>
</feature>
<feature type="helix" evidence="2">
    <location>
        <begin position="414"/>
        <end position="422"/>
    </location>
</feature>
<feature type="helix" evidence="2">
    <location>
        <begin position="430"/>
        <end position="443"/>
    </location>
</feature>
<feature type="strand" evidence="2">
    <location>
        <begin position="445"/>
        <end position="451"/>
    </location>
</feature>
<feature type="strand" evidence="2">
    <location>
        <begin position="456"/>
        <end position="458"/>
    </location>
</feature>
<feature type="strand" evidence="2">
    <location>
        <begin position="461"/>
        <end position="463"/>
    </location>
</feature>
<feature type="strand" evidence="2">
    <location>
        <begin position="468"/>
        <end position="472"/>
    </location>
</feature>
<feature type="strand" evidence="2">
    <location>
        <begin position="475"/>
        <end position="481"/>
    </location>
</feature>
<feature type="helix" evidence="2">
    <location>
        <begin position="483"/>
        <end position="494"/>
    </location>
</feature>
<feature type="strand" evidence="2">
    <location>
        <begin position="501"/>
        <end position="506"/>
    </location>
</feature>
<feature type="helix" evidence="2">
    <location>
        <begin position="512"/>
        <end position="525"/>
    </location>
</feature>
<feature type="strand" evidence="2">
    <location>
        <begin position="530"/>
        <end position="535"/>
    </location>
</feature>
<feature type="strand" evidence="2">
    <location>
        <begin position="542"/>
        <end position="547"/>
    </location>
</feature>
<reference key="1">
    <citation type="book" date="2006" name="Gram positive pathogens, 2nd edition">
        <title>The Staphylococcus aureus NCTC 8325 genome.</title>
        <editorList>
            <person name="Fischetti V."/>
            <person name="Novick R."/>
            <person name="Ferretti J."/>
            <person name="Portnoy D."/>
            <person name="Rood J."/>
        </editorList>
        <authorList>
            <person name="Gillaspy A.F."/>
            <person name="Worrell V."/>
            <person name="Orvis J."/>
            <person name="Roe B.A."/>
            <person name="Dyer D.W."/>
            <person name="Iandolo J.J."/>
        </authorList>
    </citation>
    <scope>NUCLEOTIDE SEQUENCE [LARGE SCALE GENOMIC DNA]</scope>
    <source>
        <strain>NCTC 8325 / PS 47</strain>
    </source>
</reference>
<dbReference type="EMBL" id="CP000253">
    <property type="protein sequence ID" value="ABD30300.1"/>
    <property type="molecule type" value="Genomic_DNA"/>
</dbReference>
<dbReference type="RefSeq" id="YP_499732.1">
    <property type="nucleotide sequence ID" value="NC_007795.1"/>
</dbReference>
<dbReference type="PDB" id="6W6B">
    <property type="method" value="X-ray"/>
    <property type="resolution" value="1.40 A"/>
    <property type="chains" value="A=328-548"/>
</dbReference>
<dbReference type="PDB" id="7UQ1">
    <property type="method" value="X-ray"/>
    <property type="resolution" value="1.72 A"/>
    <property type="chains" value="A=1-208"/>
</dbReference>
<dbReference type="PDB" id="8VIP">
    <property type="method" value="X-ray"/>
    <property type="resolution" value="1.77 A"/>
    <property type="chains" value="A=1-212"/>
</dbReference>
<dbReference type="PDB" id="8VIQ">
    <property type="method" value="X-ray"/>
    <property type="resolution" value="1.10 A"/>
    <property type="chains" value="A=1-212"/>
</dbReference>
<dbReference type="PDB" id="8VIR">
    <property type="method" value="X-ray"/>
    <property type="resolution" value="1.90 A"/>
    <property type="chains" value="A=1-212"/>
</dbReference>
<dbReference type="PDB" id="8VIT">
    <property type="method" value="X-ray"/>
    <property type="resolution" value="1.25 A"/>
    <property type="chains" value="A=1-212"/>
</dbReference>
<dbReference type="PDBsum" id="6W6B"/>
<dbReference type="PDBsum" id="7UQ1"/>
<dbReference type="PDBsum" id="8VIP"/>
<dbReference type="PDBsum" id="8VIQ"/>
<dbReference type="PDBsum" id="8VIR"/>
<dbReference type="PDBsum" id="8VIT"/>
<dbReference type="SMR" id="Q2FZ58"/>
<dbReference type="STRING" id="93061.SAOUHSC_01193"/>
<dbReference type="PaxDb" id="1280-SAXN108_1226"/>
<dbReference type="GeneID" id="3919326"/>
<dbReference type="KEGG" id="sao:SAOUHSC_01193"/>
<dbReference type="PATRIC" id="fig|93061.5.peg.1096"/>
<dbReference type="eggNOG" id="COG1461">
    <property type="taxonomic scope" value="Bacteria"/>
</dbReference>
<dbReference type="HOGENOM" id="CLU_017496_1_0_9"/>
<dbReference type="OrthoDB" id="9760324at2"/>
<dbReference type="BioCyc" id="MetaCyc:G1I0R-1119-MONOMER"/>
<dbReference type="PRO" id="PR:Q2FZ58"/>
<dbReference type="Proteomes" id="UP000008816">
    <property type="component" value="Chromosome"/>
</dbReference>
<dbReference type="GO" id="GO:0004371">
    <property type="term" value="F:glycerone kinase activity"/>
    <property type="evidence" value="ECO:0007669"/>
    <property type="project" value="InterPro"/>
</dbReference>
<dbReference type="GO" id="GO:0006071">
    <property type="term" value="P:glycerol metabolic process"/>
    <property type="evidence" value="ECO:0007669"/>
    <property type="project" value="InterPro"/>
</dbReference>
<dbReference type="Gene3D" id="1.25.40.340">
    <property type="match status" value="1"/>
</dbReference>
<dbReference type="InterPro" id="IPR050270">
    <property type="entry name" value="DegV_domain_contain"/>
</dbReference>
<dbReference type="InterPro" id="IPR004007">
    <property type="entry name" value="DhaL_dom"/>
</dbReference>
<dbReference type="InterPro" id="IPR036117">
    <property type="entry name" value="DhaL_dom_sf"/>
</dbReference>
<dbReference type="InterPro" id="IPR033470">
    <property type="entry name" value="FakA-like_C"/>
</dbReference>
<dbReference type="InterPro" id="IPR048394">
    <property type="entry name" value="FakA-like_M"/>
</dbReference>
<dbReference type="InterPro" id="IPR019986">
    <property type="entry name" value="YloV-like"/>
</dbReference>
<dbReference type="NCBIfam" id="NF038248">
    <property type="entry name" value="FakA_VfrB"/>
    <property type="match status" value="1"/>
</dbReference>
<dbReference type="NCBIfam" id="TIGR03599">
    <property type="entry name" value="YloV"/>
    <property type="match status" value="1"/>
</dbReference>
<dbReference type="PANTHER" id="PTHR33434">
    <property type="entry name" value="DEGV DOMAIN-CONTAINING PROTEIN DR_1986-RELATED"/>
    <property type="match status" value="1"/>
</dbReference>
<dbReference type="PANTHER" id="PTHR33434:SF4">
    <property type="entry name" value="PHOSPHATASE PROTEIN"/>
    <property type="match status" value="1"/>
</dbReference>
<dbReference type="Pfam" id="PF02734">
    <property type="entry name" value="Dak2"/>
    <property type="match status" value="1"/>
</dbReference>
<dbReference type="Pfam" id="PF13684">
    <property type="entry name" value="FakA-like_C"/>
    <property type="match status" value="1"/>
</dbReference>
<dbReference type="Pfam" id="PF21645">
    <property type="entry name" value="FakA-like_M"/>
    <property type="match status" value="1"/>
</dbReference>
<dbReference type="SMART" id="SM01121">
    <property type="entry name" value="Dak1_2"/>
    <property type="match status" value="1"/>
</dbReference>
<dbReference type="SMART" id="SM01120">
    <property type="entry name" value="Dak2"/>
    <property type="match status" value="1"/>
</dbReference>
<dbReference type="SUPFAM" id="SSF101473">
    <property type="entry name" value="DhaL-like"/>
    <property type="match status" value="1"/>
</dbReference>
<dbReference type="PROSITE" id="PS51480">
    <property type="entry name" value="DHAL"/>
    <property type="match status" value="1"/>
</dbReference>
<protein>
    <recommendedName>
        <fullName>Uncharacterized protein SAOUHSC_01193</fullName>
    </recommendedName>
</protein>
<proteinExistence type="evidence at protein level"/>
<organism>
    <name type="scientific">Staphylococcus aureus (strain NCTC 8325 / PS 47)</name>
    <dbReference type="NCBI Taxonomy" id="93061"/>
    <lineage>
        <taxon>Bacteria</taxon>
        <taxon>Bacillati</taxon>
        <taxon>Bacillota</taxon>
        <taxon>Bacilli</taxon>
        <taxon>Bacillales</taxon>
        <taxon>Staphylococcaceae</taxon>
        <taxon>Staphylococcus</taxon>
    </lineage>
</organism>
<gene>
    <name type="ordered locus">SAOUHSC_01193</name>
</gene>
<name>Y1193_STAA8</name>
<keyword id="KW-0002">3D-structure</keyword>
<keyword id="KW-1185">Reference proteome</keyword>
<evidence type="ECO:0000255" key="1">
    <source>
        <dbReference type="PROSITE-ProRule" id="PRU00813"/>
    </source>
</evidence>
<evidence type="ECO:0007829" key="2">
    <source>
        <dbReference type="PDB" id="6W6B"/>
    </source>
</evidence>
<evidence type="ECO:0007829" key="3">
    <source>
        <dbReference type="PDB" id="7UQ1"/>
    </source>
</evidence>
<evidence type="ECO:0007829" key="4">
    <source>
        <dbReference type="PDB" id="8VIQ"/>
    </source>
</evidence>